<evidence type="ECO:0000255" key="1">
    <source>
        <dbReference type="HAMAP-Rule" id="MF_00161"/>
    </source>
</evidence>
<proteinExistence type="inferred from homology"/>
<dbReference type="EC" id="3.4.23.36" evidence="1"/>
<dbReference type="EMBL" id="CP000378">
    <property type="protein sequence ID" value="ABF76805.1"/>
    <property type="molecule type" value="Genomic_DNA"/>
</dbReference>
<dbReference type="SMR" id="Q1BUA0"/>
<dbReference type="HOGENOM" id="CLU_083252_4_0_4"/>
<dbReference type="UniPathway" id="UPA00665"/>
<dbReference type="GO" id="GO:0005886">
    <property type="term" value="C:plasma membrane"/>
    <property type="evidence" value="ECO:0007669"/>
    <property type="project" value="UniProtKB-SubCell"/>
</dbReference>
<dbReference type="GO" id="GO:0004190">
    <property type="term" value="F:aspartic-type endopeptidase activity"/>
    <property type="evidence" value="ECO:0007669"/>
    <property type="project" value="UniProtKB-UniRule"/>
</dbReference>
<dbReference type="GO" id="GO:0006508">
    <property type="term" value="P:proteolysis"/>
    <property type="evidence" value="ECO:0007669"/>
    <property type="project" value="UniProtKB-KW"/>
</dbReference>
<dbReference type="HAMAP" id="MF_00161">
    <property type="entry name" value="LspA"/>
    <property type="match status" value="1"/>
</dbReference>
<dbReference type="InterPro" id="IPR001872">
    <property type="entry name" value="Peptidase_A8"/>
</dbReference>
<dbReference type="NCBIfam" id="TIGR00077">
    <property type="entry name" value="lspA"/>
    <property type="match status" value="1"/>
</dbReference>
<dbReference type="PANTHER" id="PTHR33695">
    <property type="entry name" value="LIPOPROTEIN SIGNAL PEPTIDASE"/>
    <property type="match status" value="1"/>
</dbReference>
<dbReference type="PANTHER" id="PTHR33695:SF1">
    <property type="entry name" value="LIPOPROTEIN SIGNAL PEPTIDASE"/>
    <property type="match status" value="1"/>
</dbReference>
<dbReference type="Pfam" id="PF01252">
    <property type="entry name" value="Peptidase_A8"/>
    <property type="match status" value="1"/>
</dbReference>
<dbReference type="PRINTS" id="PR00781">
    <property type="entry name" value="LIPOSIGPTASE"/>
</dbReference>
<dbReference type="PROSITE" id="PS00855">
    <property type="entry name" value="SPASE_II"/>
    <property type="match status" value="1"/>
</dbReference>
<sequence>MAKTLSKPASGALAPWLGISLIVILFDQLSKIAILKTFAYGAQHALTSFFNLVLVYNRGAAFGFLSTASGWQRWAFTALGVGATLVICFLLKRHGHQRLFSVSLALILGGALGNVIDRLVYGHVIDFLDFHLGAWHFPAFNLADSAITVGAVLLIYDELRRVRGAR</sequence>
<accession>Q1BUA0</accession>
<name>LSPA_BURO1</name>
<comment type="function">
    <text evidence="1">This protein specifically catalyzes the removal of signal peptides from prolipoproteins.</text>
</comment>
<comment type="catalytic activity">
    <reaction evidence="1">
        <text>Release of signal peptides from bacterial membrane prolipoproteins. Hydrolyzes -Xaa-Yaa-Zaa-|-(S,diacylglyceryl)Cys-, in which Xaa is hydrophobic (preferably Leu), and Yaa (Ala or Ser) and Zaa (Gly or Ala) have small, neutral side chains.</text>
        <dbReference type="EC" id="3.4.23.36"/>
    </reaction>
</comment>
<comment type="pathway">
    <text evidence="1">Protein modification; lipoprotein biosynthesis (signal peptide cleavage).</text>
</comment>
<comment type="subcellular location">
    <subcellularLocation>
        <location evidence="1">Cell inner membrane</location>
        <topology evidence="1">Multi-pass membrane protein</topology>
    </subcellularLocation>
</comment>
<comment type="similarity">
    <text evidence="1">Belongs to the peptidase A8 family.</text>
</comment>
<gene>
    <name evidence="1" type="primary">lspA</name>
    <name type="ordered locus">Bcen_1902</name>
</gene>
<protein>
    <recommendedName>
        <fullName evidence="1">Lipoprotein signal peptidase</fullName>
        <ecNumber evidence="1">3.4.23.36</ecNumber>
    </recommendedName>
    <alternativeName>
        <fullName evidence="1">Prolipoprotein signal peptidase</fullName>
    </alternativeName>
    <alternativeName>
        <fullName evidence="1">Signal peptidase II</fullName>
        <shortName evidence="1">SPase II</shortName>
    </alternativeName>
</protein>
<keyword id="KW-0064">Aspartyl protease</keyword>
<keyword id="KW-0997">Cell inner membrane</keyword>
<keyword id="KW-1003">Cell membrane</keyword>
<keyword id="KW-0378">Hydrolase</keyword>
<keyword id="KW-0472">Membrane</keyword>
<keyword id="KW-0645">Protease</keyword>
<keyword id="KW-0812">Transmembrane</keyword>
<keyword id="KW-1133">Transmembrane helix</keyword>
<reference key="1">
    <citation type="submission" date="2006-05" db="EMBL/GenBank/DDBJ databases">
        <title>Complete sequence of chromosome 1 of Burkholderia cenocepacia AU 1054.</title>
        <authorList>
            <consortium name="US DOE Joint Genome Institute"/>
            <person name="Copeland A."/>
            <person name="Lucas S."/>
            <person name="Lapidus A."/>
            <person name="Barry K."/>
            <person name="Detter J.C."/>
            <person name="Glavina del Rio T."/>
            <person name="Hammon N."/>
            <person name="Israni S."/>
            <person name="Dalin E."/>
            <person name="Tice H."/>
            <person name="Pitluck S."/>
            <person name="Chain P."/>
            <person name="Malfatti S."/>
            <person name="Shin M."/>
            <person name="Vergez L."/>
            <person name="Schmutz J."/>
            <person name="Larimer F."/>
            <person name="Land M."/>
            <person name="Hauser L."/>
            <person name="Kyrpides N."/>
            <person name="Lykidis A."/>
            <person name="LiPuma J.J."/>
            <person name="Konstantinidis K."/>
            <person name="Tiedje J.M."/>
            <person name="Richardson P."/>
        </authorList>
    </citation>
    <scope>NUCLEOTIDE SEQUENCE [LARGE SCALE GENOMIC DNA]</scope>
    <source>
        <strain>AU 1054</strain>
    </source>
</reference>
<organism>
    <name type="scientific">Burkholderia orbicola (strain AU 1054)</name>
    <dbReference type="NCBI Taxonomy" id="331271"/>
    <lineage>
        <taxon>Bacteria</taxon>
        <taxon>Pseudomonadati</taxon>
        <taxon>Pseudomonadota</taxon>
        <taxon>Betaproteobacteria</taxon>
        <taxon>Burkholderiales</taxon>
        <taxon>Burkholderiaceae</taxon>
        <taxon>Burkholderia</taxon>
        <taxon>Burkholderia cepacia complex</taxon>
        <taxon>Burkholderia orbicola</taxon>
    </lineage>
</organism>
<feature type="chain" id="PRO_1000038782" description="Lipoprotein signal peptidase">
    <location>
        <begin position="1"/>
        <end position="166"/>
    </location>
</feature>
<feature type="transmembrane region" description="Helical" evidence="1">
    <location>
        <begin position="9"/>
        <end position="29"/>
    </location>
</feature>
<feature type="transmembrane region" description="Helical" evidence="1">
    <location>
        <begin position="45"/>
        <end position="65"/>
    </location>
</feature>
<feature type="transmembrane region" description="Helical" evidence="1">
    <location>
        <begin position="71"/>
        <end position="91"/>
    </location>
</feature>
<feature type="transmembrane region" description="Helical" evidence="1">
    <location>
        <begin position="100"/>
        <end position="120"/>
    </location>
</feature>
<feature type="transmembrane region" description="Helical" evidence="1">
    <location>
        <begin position="135"/>
        <end position="155"/>
    </location>
</feature>
<feature type="active site" evidence="1">
    <location>
        <position position="126"/>
    </location>
</feature>
<feature type="active site" evidence="1">
    <location>
        <position position="144"/>
    </location>
</feature>